<protein>
    <recommendedName>
        <fullName evidence="1">Uncharacterized methyltransferase BLi02856/BL02021</fullName>
        <ecNumber evidence="1">2.1.1.-</ecNumber>
    </recommendedName>
</protein>
<name>Y2856_BACLD</name>
<proteinExistence type="inferred from homology"/>
<comment type="function">
    <text evidence="1">Could be a S-adenosyl-L-methionine-dependent methyltransferase.</text>
</comment>
<comment type="similarity">
    <text evidence="1">Belongs to the methyltransferase superfamily. YrrT family.</text>
</comment>
<keyword id="KW-0489">Methyltransferase</keyword>
<keyword id="KW-1185">Reference proteome</keyword>
<keyword id="KW-0949">S-adenosyl-L-methionine</keyword>
<keyword id="KW-0808">Transferase</keyword>
<feature type="chain" id="PRO_0000373846" description="Uncharacterized methyltransferase BLi02856/BL02021">
    <location>
        <begin position="1"/>
        <end position="213"/>
    </location>
</feature>
<feature type="binding site" evidence="1">
    <location>
        <position position="53"/>
    </location>
    <ligand>
        <name>S-adenosyl-L-methionine</name>
        <dbReference type="ChEBI" id="CHEBI:59789"/>
    </ligand>
</feature>
<feature type="binding site" evidence="1">
    <location>
        <position position="74"/>
    </location>
    <ligand>
        <name>S-adenosyl-L-methionine</name>
        <dbReference type="ChEBI" id="CHEBI:59789"/>
    </ligand>
</feature>
<feature type="binding site" evidence="1">
    <location>
        <position position="97"/>
    </location>
    <ligand>
        <name>S-adenosyl-L-methionine</name>
        <dbReference type="ChEBI" id="CHEBI:59789"/>
    </ligand>
</feature>
<evidence type="ECO:0000255" key="1">
    <source>
        <dbReference type="HAMAP-Rule" id="MF_02100"/>
    </source>
</evidence>
<dbReference type="EC" id="2.1.1.-" evidence="1"/>
<dbReference type="EMBL" id="CP000002">
    <property type="protein sequence ID" value="AAU24362.1"/>
    <property type="molecule type" value="Genomic_DNA"/>
</dbReference>
<dbReference type="EMBL" id="AE017333">
    <property type="protein sequence ID" value="AAU41726.1"/>
    <property type="molecule type" value="Genomic_DNA"/>
</dbReference>
<dbReference type="RefSeq" id="WP_009327796.1">
    <property type="nucleotide sequence ID" value="NC_006322.1"/>
</dbReference>
<dbReference type="SMR" id="Q65GT8"/>
<dbReference type="STRING" id="279010.BL02021"/>
<dbReference type="KEGG" id="bld:BLi02856"/>
<dbReference type="KEGG" id="bli:BL02021"/>
<dbReference type="eggNOG" id="COG2226">
    <property type="taxonomic scope" value="Bacteria"/>
</dbReference>
<dbReference type="HOGENOM" id="CLU_111961_0_0_9"/>
<dbReference type="Proteomes" id="UP000000606">
    <property type="component" value="Chromosome"/>
</dbReference>
<dbReference type="GO" id="GO:0000179">
    <property type="term" value="F:rRNA (adenine-N6,N6-)-dimethyltransferase activity"/>
    <property type="evidence" value="ECO:0007669"/>
    <property type="project" value="InterPro"/>
</dbReference>
<dbReference type="CDD" id="cd02440">
    <property type="entry name" value="AdoMet_MTases"/>
    <property type="match status" value="1"/>
</dbReference>
<dbReference type="Gene3D" id="3.40.50.150">
    <property type="entry name" value="Vaccinia Virus protein VP39"/>
    <property type="match status" value="1"/>
</dbReference>
<dbReference type="HAMAP" id="MF_02100">
    <property type="entry name" value="Methyltr_YrrT"/>
    <property type="match status" value="1"/>
</dbReference>
<dbReference type="InterPro" id="IPR041698">
    <property type="entry name" value="Methyltransf_25"/>
</dbReference>
<dbReference type="InterPro" id="IPR020598">
    <property type="entry name" value="rRNA_Ade_methylase_Trfase_N"/>
</dbReference>
<dbReference type="InterPro" id="IPR029063">
    <property type="entry name" value="SAM-dependent_MTases_sf"/>
</dbReference>
<dbReference type="InterPro" id="IPR023553">
    <property type="entry name" value="Uncharacterised_MeTfrase_YrrT"/>
</dbReference>
<dbReference type="PANTHER" id="PTHR43861">
    <property type="entry name" value="TRANS-ACONITATE 2-METHYLTRANSFERASE-RELATED"/>
    <property type="match status" value="1"/>
</dbReference>
<dbReference type="Pfam" id="PF13649">
    <property type="entry name" value="Methyltransf_25"/>
    <property type="match status" value="1"/>
</dbReference>
<dbReference type="SMART" id="SM00650">
    <property type="entry name" value="rADc"/>
    <property type="match status" value="1"/>
</dbReference>
<dbReference type="SUPFAM" id="SSF53335">
    <property type="entry name" value="S-adenosyl-L-methionine-dependent methyltransferases"/>
    <property type="match status" value="1"/>
</dbReference>
<accession>Q65GT8</accession>
<accession>Q62S97</accession>
<reference key="1">
    <citation type="journal article" date="2004" name="J. Mol. Microbiol. Biotechnol.">
        <title>The complete genome sequence of Bacillus licheniformis DSM13, an organism with great industrial potential.</title>
        <authorList>
            <person name="Veith B."/>
            <person name="Herzberg C."/>
            <person name="Steckel S."/>
            <person name="Feesche J."/>
            <person name="Maurer K.H."/>
            <person name="Ehrenreich P."/>
            <person name="Baeumer S."/>
            <person name="Henne A."/>
            <person name="Liesegang H."/>
            <person name="Merkl R."/>
            <person name="Ehrenreich A."/>
            <person name="Gottschalk G."/>
        </authorList>
    </citation>
    <scope>NUCLEOTIDE SEQUENCE [LARGE SCALE GENOMIC DNA]</scope>
    <source>
        <strain>ATCC 14580 / DSM 13 / JCM 2505 / CCUG 7422 / NBRC 12200 / NCIMB 9375 / NCTC 10341 / NRRL NRS-1264 / Gibson 46</strain>
    </source>
</reference>
<reference key="2">
    <citation type="journal article" date="2004" name="Genome Biol.">
        <title>Complete genome sequence of the industrial bacterium Bacillus licheniformis and comparisons with closely related Bacillus species.</title>
        <authorList>
            <person name="Rey M.W."/>
            <person name="Ramaiya P."/>
            <person name="Nelson B.A."/>
            <person name="Brody-Karpin S.D."/>
            <person name="Zaretsky E.J."/>
            <person name="Tang M."/>
            <person name="Lopez de Leon A."/>
            <person name="Xiang H."/>
            <person name="Gusti V."/>
            <person name="Clausen I.G."/>
            <person name="Olsen P.B."/>
            <person name="Rasmussen M.D."/>
            <person name="Andersen J.T."/>
            <person name="Joergensen P.L."/>
            <person name="Larsen T.S."/>
            <person name="Sorokin A."/>
            <person name="Bolotin A."/>
            <person name="Lapidus A."/>
            <person name="Galleron N."/>
            <person name="Ehrlich S.D."/>
            <person name="Berka R.M."/>
        </authorList>
    </citation>
    <scope>NUCLEOTIDE SEQUENCE [LARGE SCALE GENOMIC DNA]</scope>
    <source>
        <strain>ATCC 14580 / DSM 13 / JCM 2505 / CCUG 7422 / NBRC 12200 / NCIMB 9375 / NCTC 10341 / NRRL NRS-1264 / Gibson 46</strain>
    </source>
</reference>
<organism>
    <name type="scientific">Bacillus licheniformis (strain ATCC 14580 / DSM 13 / JCM 2505 / CCUG 7422 / NBRC 12200 / NCIMB 9375 / NCTC 10341 / NRRL NRS-1264 / Gibson 46)</name>
    <dbReference type="NCBI Taxonomy" id="279010"/>
    <lineage>
        <taxon>Bacteria</taxon>
        <taxon>Bacillati</taxon>
        <taxon>Bacillota</taxon>
        <taxon>Bacilli</taxon>
        <taxon>Bacillales</taxon>
        <taxon>Bacillaceae</taxon>
        <taxon>Bacillus</taxon>
    </lineage>
</organism>
<gene>
    <name type="primary">yrrT</name>
    <name type="ordered locus">BLi02856</name>
    <name type="ordered locus">BL02021</name>
</gene>
<sequence length="213" mass="23942">MGREFIPLFENWANSYDDTVVGRDLQYKEVFRDYDGILDDVVSRSGHKVLEFGVGTGNLTAKLLAAGKAVTGVEPSKAMREIAEAKLPENAVIVDGDFIDFPDPPFSPDTIVSSYAFHHLTNEEKREAVKRYGKMLGKHGKIVFADTVFKNREAFSAAVKKAKENGFLQLAEDLETEHYPTISEMETIFTSEHFSIAFQKHNDFVWVMEAAKL</sequence>